<sequence length="550" mass="59532">MGLKVNVSAIFMAVLLTLQTPTGQIHWGNLSKIGVVGIGSASYKVMTRSSHQSLVIKLMPNITLLNNCTRVEIAEYRRLLRTVLEPIRDALNAMTQNIRPVQSVASSRRHKRFAGVVLAGAALGVATAAQITAGIALHQSMLNSQAIDNLRASLETTNQAIEAIRQAGQEMILAVQGVQDYINNELIPSMNQLSCDLIGQKLGLKLLRYYTEILSLFGPSLRDPISAEISIQALSYALGGDINKVLEKLGYSGGDLLGILESRGIKARITHVDTESYFIVLSIAYPTLSEIKGVIVHRLEGVSYNIGSQEWYTTVPKYVATQGYLISNFDESSCTFMPEGTVCSQNALYPMSPLLQECLRGSTKSCARTLVSGSFGNRFILSQGNLIANCASILCKCYTTGTIINQDPDKILTYIAADHCPVVEVNGVTIQVGSRRYPDAVYLHRIDLGPPISLERLDVGTNLGNAIAKLEDAKELLESSDQILRSMKGLSSTSIVYILIAVCLGGLIGIPALICCCRGRCNKKGEQVGMSRPGLKPDLTGTSKSYVRSL</sequence>
<organismHost>
    <name type="scientific">Homo sapiens</name>
    <name type="common">Human</name>
    <dbReference type="NCBI Taxonomy" id="9606"/>
</organismHost>
<accession>P69354</accession>
<accession>P08300</accession>
<dbReference type="EMBL" id="Z66517">
    <property type="protein sequence ID" value="CAA91367.1"/>
    <property type="status" value="ALT_INIT"/>
    <property type="molecule type" value="Genomic_RNA"/>
</dbReference>
<dbReference type="EMBL" id="Z66517">
    <property type="protein sequence ID" value="CAA91368.1"/>
    <property type="molecule type" value="Genomic_RNA"/>
</dbReference>
<dbReference type="RefSeq" id="NP_056922.1">
    <property type="nucleotide sequence ID" value="NC_001498.1"/>
</dbReference>
<dbReference type="SMR" id="P69354"/>
<dbReference type="GlyCosmos" id="P69354">
    <property type="glycosylation" value="3 sites, No reported glycans"/>
</dbReference>
<dbReference type="GeneID" id="1489800"/>
<dbReference type="KEGG" id="vg:1489800"/>
<dbReference type="Proteomes" id="UP000100252">
    <property type="component" value="Genome"/>
</dbReference>
<dbReference type="GO" id="GO:0020002">
    <property type="term" value="C:host cell plasma membrane"/>
    <property type="evidence" value="ECO:0007669"/>
    <property type="project" value="UniProtKB-SubCell"/>
</dbReference>
<dbReference type="GO" id="GO:0016020">
    <property type="term" value="C:membrane"/>
    <property type="evidence" value="ECO:0007669"/>
    <property type="project" value="UniProtKB-KW"/>
</dbReference>
<dbReference type="GO" id="GO:0019031">
    <property type="term" value="C:viral envelope"/>
    <property type="evidence" value="ECO:0007669"/>
    <property type="project" value="UniProtKB-KW"/>
</dbReference>
<dbReference type="GO" id="GO:0055036">
    <property type="term" value="C:virion membrane"/>
    <property type="evidence" value="ECO:0007669"/>
    <property type="project" value="UniProtKB-SubCell"/>
</dbReference>
<dbReference type="GO" id="GO:0019064">
    <property type="term" value="P:fusion of virus membrane with host plasma membrane"/>
    <property type="evidence" value="ECO:0007669"/>
    <property type="project" value="UniProtKB-KW"/>
</dbReference>
<dbReference type="GO" id="GO:0046718">
    <property type="term" value="P:symbiont entry into host cell"/>
    <property type="evidence" value="ECO:0007669"/>
    <property type="project" value="UniProtKB-KW"/>
</dbReference>
<dbReference type="Gene3D" id="1.10.287.2480">
    <property type="match status" value="1"/>
</dbReference>
<dbReference type="Gene3D" id="6.10.10.110">
    <property type="match status" value="1"/>
</dbReference>
<dbReference type="Gene3D" id="2.60.40.1690">
    <property type="entry name" value="Head and neck region of the ectodomain of NDV fusion glycoprotein"/>
    <property type="match status" value="1"/>
</dbReference>
<dbReference type="Gene3D" id="2.40.490.10">
    <property type="entry name" value="Newcastle disease virus like domain"/>
    <property type="match status" value="1"/>
</dbReference>
<dbReference type="InterPro" id="IPR000776">
    <property type="entry name" value="Fusion_F0_Paramyxovir"/>
</dbReference>
<dbReference type="Pfam" id="PF00523">
    <property type="entry name" value="Fusion_gly"/>
    <property type="match status" value="1"/>
</dbReference>
<dbReference type="SUPFAM" id="SSF69922">
    <property type="entry name" value="Head and neck region of the ectodomain of NDV fusion glycoprotein"/>
    <property type="match status" value="1"/>
</dbReference>
<dbReference type="SUPFAM" id="SSF58069">
    <property type="entry name" value="Virus ectodomain"/>
    <property type="match status" value="1"/>
</dbReference>
<proteinExistence type="inferred from homology"/>
<keyword id="KW-0165">Cleavage on pair of basic residues</keyword>
<keyword id="KW-0175">Coiled coil</keyword>
<keyword id="KW-1015">Disulfide bond</keyword>
<keyword id="KW-1169">Fusion of virus membrane with host cell membrane</keyword>
<keyword id="KW-1168">Fusion of virus membrane with host membrane</keyword>
<keyword id="KW-0325">Glycoprotein</keyword>
<keyword id="KW-1032">Host cell membrane</keyword>
<keyword id="KW-1043">Host membrane</keyword>
<keyword id="KW-0472">Membrane</keyword>
<keyword id="KW-0732">Signal</keyword>
<keyword id="KW-0812">Transmembrane</keyword>
<keyword id="KW-1133">Transmembrane helix</keyword>
<keyword id="KW-0261">Viral envelope protein</keyword>
<keyword id="KW-1162">Viral penetration into host cytoplasm</keyword>
<keyword id="KW-0946">Virion</keyword>
<keyword id="KW-1160">Virus entry into host cell</keyword>
<reference key="1">
    <citation type="submission" date="1995-10" db="EMBL/GenBank/DDBJ databases">
        <authorList>
            <person name="Billeter M.A."/>
        </authorList>
    </citation>
    <scope>NUCLEOTIDE SEQUENCE [GENOMIC RNA]</scope>
</reference>
<name>FUS_MEASF</name>
<protein>
    <recommendedName>
        <fullName>Fusion glycoprotein F0</fullName>
    </recommendedName>
    <component>
        <recommendedName>
            <fullName>Fusion glycoprotein F2</fullName>
        </recommendedName>
    </component>
    <component>
        <recommendedName>
            <fullName>Fusion glycoprotein F1</fullName>
        </recommendedName>
    </component>
</protein>
<gene>
    <name type="primary">F</name>
</gene>
<comment type="function">
    <text evidence="1 2">Class I viral fusion protein. Under the current model, the protein has at least 3 conformational states: pre-fusion native state, pre-hairpin intermediate state, and post-fusion hairpin state. During viral and plasma cell membrane fusion, the heptad repeat (HR) regions assume a trimer-of-hairpins structure, positioning the fusion peptide in close proximity to the C-terminal region of the ectodomain. The formation of this structure appears to drive apposition and subsequent fusion of viral and plasma cell membranes. Directs fusion of viral and cellular membranes leading to delivery of the nucleocapsid into the cytoplasm. This fusion is pH independent and occurs directly at the outer cell membrane. During viral entry or virus-mediated fusion between infected cells and neighboring susceptible cells, the head domain of the H protein initially binds to its receptor and then the stalk region of the H protein transmits the fusion-triggering signal to the F protein (By similarity). Upon HN binding to its cellular receptor, the hydrophobic fusion peptide is unmasked and interacts with the cellular membrane, inducing the fusion between cell and virion membranes. Later in infection, F proteins expressed at the plasma membrane of infected cells could mediate fusion with adjacent cells to form syncytia, a cytopathic effect that could lead to tissue necrosis (By similarity).</text>
</comment>
<comment type="function">
    <text evidence="2">Some hyperfusogenic isolates can induce membrane fusion in SLAM- and nectin-4-negative cells and are linked to fatal subacute sclerosing panencephalitis (SSPE) or measles inclusion body encephalitis (MIBE). The neuropathogenicity is closely associated with enhanced propagation mediated by cell-to-cell fusion in the brain, which is principally regulated by hyperfusogenic mutations of the viral F protein. Cell-to-cell transmission of the virus also occurs with hyperfusogenic isolates.</text>
</comment>
<comment type="subunit">
    <text evidence="2">Homotrimer of disulfide-linked F1-F2.</text>
</comment>
<comment type="subcellular location">
    <subcellularLocation>
        <location evidence="1">Virion membrane</location>
        <topology evidence="1">Single-pass type I membrane protein</topology>
    </subcellularLocation>
    <subcellularLocation>
        <location evidence="1">Host cell membrane</location>
        <topology evidence="1">Single-pass membrane protein</topology>
    </subcellularLocation>
</comment>
<comment type="domain">
    <text evidence="2">Contains 3 heptad repreat regions, HRA, HRB and HRC.</text>
</comment>
<comment type="PTM">
    <text evidence="2">The inactive precursor F0 is glycosylated and proteolytically cleaved into F1 and F2 to be functionally active. The cleavage is mediated by host furin during the transport and maturation of the polypeptide.</text>
</comment>
<comment type="similarity">
    <text evidence="4">Belongs to the paramyxoviruses fusion glycoprotein family.</text>
</comment>
<comment type="sequence caution" evidence="4">
    <conflict type="erroneous initiation">
        <sequence resource="EMBL-CDS" id="CAA91367"/>
    </conflict>
</comment>
<evidence type="ECO:0000250" key="1"/>
<evidence type="ECO:0000250" key="2">
    <source>
        <dbReference type="UniProtKB" id="Q786F3"/>
    </source>
</evidence>
<evidence type="ECO:0000255" key="3"/>
<evidence type="ECO:0000305" key="4"/>
<organism>
    <name type="scientific">Measles virus (strain Edmonston B)</name>
    <name type="common">MeV</name>
    <name type="synonym">Subacute sclerose panencephalitis virus</name>
    <dbReference type="NCBI Taxonomy" id="70146"/>
    <lineage>
        <taxon>Viruses</taxon>
        <taxon>Riboviria</taxon>
        <taxon>Orthornavirae</taxon>
        <taxon>Negarnaviricota</taxon>
        <taxon>Haploviricotina</taxon>
        <taxon>Monjiviricetes</taxon>
        <taxon>Mononegavirales</taxon>
        <taxon>Paramyxoviridae</taxon>
        <taxon>Orthoparamyxovirinae</taxon>
        <taxon>Morbillivirus</taxon>
        <taxon>Morbillivirus hominis</taxon>
        <taxon>Measles morbillivirus</taxon>
    </lineage>
</organism>
<feature type="signal peptide" evidence="3">
    <location>
        <begin position="1"/>
        <end position="23"/>
    </location>
</feature>
<feature type="chain" id="PRO_0000039258" description="Fusion glycoprotein F0">
    <location>
        <begin position="24"/>
        <end position="550"/>
    </location>
</feature>
<feature type="chain" id="PRO_0000039259" description="Fusion glycoprotein F2">
    <location>
        <begin position="24"/>
        <end position="112"/>
    </location>
</feature>
<feature type="chain" id="PRO_0000039260" description="Fusion glycoprotein F1">
    <location>
        <begin position="113"/>
        <end position="550"/>
    </location>
</feature>
<feature type="topological domain" description="Extracellular" evidence="1">
    <location>
        <begin position="24"/>
        <end position="487"/>
    </location>
</feature>
<feature type="transmembrane region" description="Helical" evidence="3">
    <location>
        <begin position="488"/>
        <end position="518"/>
    </location>
</feature>
<feature type="topological domain" description="Cytoplasmic" evidence="1">
    <location>
        <begin position="519"/>
        <end position="550"/>
    </location>
</feature>
<feature type="region of interest" description="HRC" evidence="2">
    <location>
        <begin position="69"/>
        <end position="95"/>
    </location>
</feature>
<feature type="region of interest" description="Fusion peptide" evidence="2">
    <location>
        <begin position="113"/>
        <end position="138"/>
    </location>
</feature>
<feature type="region of interest" description="HRA" evidence="2">
    <location>
        <begin position="139"/>
        <end position="215"/>
    </location>
</feature>
<feature type="region of interest" description="Interaction with hemagglutinin" evidence="2">
    <location>
        <begin position="367"/>
        <end position="444"/>
    </location>
</feature>
<feature type="region of interest" description="HRB" evidence="2">
    <location>
        <begin position="445"/>
        <end position="494"/>
    </location>
</feature>
<feature type="coiled-coil region" evidence="3">
    <location>
        <begin position="138"/>
        <end position="166"/>
    </location>
</feature>
<feature type="coiled-coil region" evidence="3">
    <location>
        <begin position="462"/>
        <end position="487"/>
    </location>
</feature>
<feature type="site" description="Cleavage; by host" evidence="1">
    <location>
        <begin position="112"/>
        <end position="113"/>
    </location>
</feature>
<feature type="glycosylation site" description="N-linked (GlcNAc...) asparagine; by host" evidence="3">
    <location>
        <position position="29"/>
    </location>
</feature>
<feature type="glycosylation site" description="N-linked (GlcNAc...) asparagine; by host" evidence="3">
    <location>
        <position position="61"/>
    </location>
</feature>
<feature type="glycosylation site" description="N-linked (GlcNAc...) asparagine; by host" evidence="3">
    <location>
        <position position="67"/>
    </location>
</feature>
<feature type="disulfide bond" description="Interchain (with C-195)" evidence="2">
    <location>
        <position position="68"/>
    </location>
</feature>
<feature type="disulfide bond" description="Interchain (with C-68)" evidence="2">
    <location>
        <position position="195"/>
    </location>
</feature>
<feature type="disulfide bond" evidence="2">
    <location>
        <begin position="334"/>
        <end position="343"/>
    </location>
</feature>
<feature type="disulfide bond" evidence="2">
    <location>
        <begin position="358"/>
        <end position="366"/>
    </location>
</feature>
<feature type="disulfide bond" evidence="2">
    <location>
        <begin position="390"/>
        <end position="395"/>
    </location>
</feature>
<feature type="disulfide bond" evidence="2">
    <location>
        <begin position="397"/>
        <end position="420"/>
    </location>
</feature>